<evidence type="ECO:0000255" key="1"/>
<evidence type="ECO:0000269" key="2">
    <source>
    </source>
</evidence>
<evidence type="ECO:0000269" key="3">
    <source>
    </source>
</evidence>
<evidence type="ECO:0000305" key="4"/>
<evidence type="ECO:0000312" key="5">
    <source>
        <dbReference type="EMBL" id="AAF55819.1"/>
    </source>
</evidence>
<evidence type="ECO:0000312" key="6">
    <source>
        <dbReference type="EMBL" id="AAK64521.1"/>
    </source>
</evidence>
<evidence type="ECO:0000312" key="7">
    <source>
        <dbReference type="EMBL" id="AAM50911.1"/>
    </source>
</evidence>
<evidence type="ECO:0000312" key="8">
    <source>
        <dbReference type="FlyBase" id="FBgn0038838"/>
    </source>
</evidence>
<comment type="function">
    <text evidence="2">A humoral factor that may play a role in stress tolerance.</text>
</comment>
<comment type="subcellular location">
    <subcellularLocation>
        <location evidence="2 4">Secreted</location>
    </subcellularLocation>
</comment>
<comment type="developmental stage">
    <text evidence="2">Expressed in late stage embryos. Disappears by early larval states and reappears in the third larval instar. Subsequently maintained throughout pupal development until adulthood.</text>
</comment>
<comment type="induction">
    <text evidence="2">By a variety of stressful conditions including bacterial infection, heat shock and exposure to ultraviolet light.</text>
</comment>
<comment type="similarity">
    <text evidence="1">Belongs to the Turandot family.</text>
</comment>
<comment type="sequence caution" evidence="4">
    <conflict type="erroneous termination">
        <sequence resource="EMBL-CDS" id="AAK64521"/>
    </conflict>
    <text>Extended C-terminus.</text>
</comment>
<sequence>MNFKTSLICFALLLIGTLCSAYSNQERQRDSRRVAEIMRTSWDDNTKIKRIQELLTIYNRMAPSLRPDERARMDRFISGYTGEIMVDGVPSQGGARRIFKKILSPAAKSVATGFFTELGASLASILTSWFPANTERNH</sequence>
<gene>
    <name evidence="5 8" type="primary">TotB</name>
    <name type="ORF">CG5609</name>
</gene>
<accession>Q9VDH4</accession>
<accession>Q962E0</accession>
<keyword id="KW-0391">Immunity</keyword>
<keyword id="KW-0399">Innate immunity</keyword>
<keyword id="KW-1185">Reference proteome</keyword>
<keyword id="KW-0964">Secreted</keyword>
<keyword id="KW-0732">Signal</keyword>
<dbReference type="EMBL" id="AY035988">
    <property type="protein sequence ID" value="AAK64521.1"/>
    <property type="status" value="ALT_SEQ"/>
    <property type="molecule type" value="mRNA"/>
</dbReference>
<dbReference type="EMBL" id="AE014297">
    <property type="protein sequence ID" value="AAF55819.1"/>
    <property type="molecule type" value="Genomic_DNA"/>
</dbReference>
<dbReference type="EMBL" id="AY119051">
    <property type="protein sequence ID" value="AAM50911.1"/>
    <property type="molecule type" value="mRNA"/>
</dbReference>
<dbReference type="RefSeq" id="NP_524422.1">
    <property type="nucleotide sequence ID" value="NM_079698.3"/>
</dbReference>
<dbReference type="SMR" id="Q9VDH4"/>
<dbReference type="BioGRID" id="67447">
    <property type="interactions" value="2"/>
</dbReference>
<dbReference type="FunCoup" id="Q9VDH4">
    <property type="interactions" value="44"/>
</dbReference>
<dbReference type="IntAct" id="Q9VDH4">
    <property type="interactions" value="5"/>
</dbReference>
<dbReference type="STRING" id="7227.FBpp0083380"/>
<dbReference type="PaxDb" id="7227-FBpp0083380"/>
<dbReference type="DNASU" id="42474"/>
<dbReference type="EnsemblMetazoa" id="FBtr0083973">
    <property type="protein sequence ID" value="FBpp0083380"/>
    <property type="gene ID" value="FBgn0038838"/>
</dbReference>
<dbReference type="GeneID" id="42474"/>
<dbReference type="KEGG" id="dme:Dmel_CG5609"/>
<dbReference type="UCSC" id="CG5609-RA">
    <property type="organism name" value="d. melanogaster"/>
</dbReference>
<dbReference type="AGR" id="FB:FBgn0038838"/>
<dbReference type="CTD" id="42474"/>
<dbReference type="FlyBase" id="FBgn0038838">
    <property type="gene designation" value="TotB"/>
</dbReference>
<dbReference type="VEuPathDB" id="VectorBase:FBgn0038838"/>
<dbReference type="GeneTree" id="ENSGT00940000176310"/>
<dbReference type="HOGENOM" id="CLU_152780_0_0_1"/>
<dbReference type="InParanoid" id="Q9VDH4"/>
<dbReference type="OMA" id="CSAYSNQ"/>
<dbReference type="OrthoDB" id="7861285at2759"/>
<dbReference type="PhylomeDB" id="Q9VDH4"/>
<dbReference type="BioGRID-ORCS" id="42474">
    <property type="hits" value="0 hits in 1 CRISPR screen"/>
</dbReference>
<dbReference type="GenomeRNAi" id="42474"/>
<dbReference type="PRO" id="PR:Q9VDH4"/>
<dbReference type="Proteomes" id="UP000000803">
    <property type="component" value="Chromosome 3R"/>
</dbReference>
<dbReference type="Bgee" id="FBgn0038838">
    <property type="expression patterns" value="Expressed in fat body cell in arthropod fat body and 9 other cell types or tissues"/>
</dbReference>
<dbReference type="GO" id="GO:0005576">
    <property type="term" value="C:extracellular region"/>
    <property type="evidence" value="ECO:0000255"/>
    <property type="project" value="FlyBase"/>
</dbReference>
<dbReference type="GO" id="GO:0005615">
    <property type="term" value="C:extracellular space"/>
    <property type="evidence" value="ECO:0000314"/>
    <property type="project" value="UniProtKB"/>
</dbReference>
<dbReference type="GO" id="GO:0034605">
    <property type="term" value="P:cellular response to heat"/>
    <property type="evidence" value="ECO:0000270"/>
    <property type="project" value="FlyBase"/>
</dbReference>
<dbReference type="GO" id="GO:0034644">
    <property type="term" value="P:cellular response to UV"/>
    <property type="evidence" value="ECO:0000270"/>
    <property type="project" value="FlyBase"/>
</dbReference>
<dbReference type="GO" id="GO:0045087">
    <property type="term" value="P:innate immune response"/>
    <property type="evidence" value="ECO:0007669"/>
    <property type="project" value="UniProtKB-KW"/>
</dbReference>
<dbReference type="GO" id="GO:0009617">
    <property type="term" value="P:response to bacterium"/>
    <property type="evidence" value="ECO:0000270"/>
    <property type="project" value="FlyBase"/>
</dbReference>
<dbReference type="GO" id="GO:0009408">
    <property type="term" value="P:response to heat"/>
    <property type="evidence" value="ECO:0000314"/>
    <property type="project" value="UniProtKB"/>
</dbReference>
<dbReference type="GO" id="GO:0009411">
    <property type="term" value="P:response to UV"/>
    <property type="evidence" value="ECO:0000314"/>
    <property type="project" value="UniProtKB"/>
</dbReference>
<dbReference type="InterPro" id="IPR010825">
    <property type="entry name" value="Turandot"/>
</dbReference>
<dbReference type="Pfam" id="PF07240">
    <property type="entry name" value="Turandot"/>
    <property type="match status" value="1"/>
</dbReference>
<organism>
    <name type="scientific">Drosophila melanogaster</name>
    <name type="common">Fruit fly</name>
    <dbReference type="NCBI Taxonomy" id="7227"/>
    <lineage>
        <taxon>Eukaryota</taxon>
        <taxon>Metazoa</taxon>
        <taxon>Ecdysozoa</taxon>
        <taxon>Arthropoda</taxon>
        <taxon>Hexapoda</taxon>
        <taxon>Insecta</taxon>
        <taxon>Pterygota</taxon>
        <taxon>Neoptera</taxon>
        <taxon>Endopterygota</taxon>
        <taxon>Diptera</taxon>
        <taxon>Brachycera</taxon>
        <taxon>Muscomorpha</taxon>
        <taxon>Ephydroidea</taxon>
        <taxon>Drosophilidae</taxon>
        <taxon>Drosophila</taxon>
        <taxon>Sophophora</taxon>
    </lineage>
</organism>
<reference evidence="4 6" key="1">
    <citation type="journal article" date="2001" name="Biochem. Biophys. Res. Commun.">
        <title>A family of Turandot-related genes in the humoral stress response of Drosophila.</title>
        <authorList>
            <person name="Ekengren S."/>
            <person name="Hultmark D."/>
        </authorList>
    </citation>
    <scope>NUCLEOTIDE SEQUENCE [MRNA]</scope>
    <scope>POSSIBLE FUNCTION</scope>
    <scope>DEVELOPMENTAL STAGE</scope>
    <scope>INDUCTION</scope>
    <source>
        <strain evidence="6">Canton-S</strain>
    </source>
</reference>
<reference evidence="5" key="2">
    <citation type="journal article" date="2000" name="Science">
        <title>The genome sequence of Drosophila melanogaster.</title>
        <authorList>
            <person name="Adams M.D."/>
            <person name="Celniker S.E."/>
            <person name="Holt R.A."/>
            <person name="Evans C.A."/>
            <person name="Gocayne J.D."/>
            <person name="Amanatides P.G."/>
            <person name="Scherer S.E."/>
            <person name="Li P.W."/>
            <person name="Hoskins R.A."/>
            <person name="Galle R.F."/>
            <person name="George R.A."/>
            <person name="Lewis S.E."/>
            <person name="Richards S."/>
            <person name="Ashburner M."/>
            <person name="Henderson S.N."/>
            <person name="Sutton G.G."/>
            <person name="Wortman J.R."/>
            <person name="Yandell M.D."/>
            <person name="Zhang Q."/>
            <person name="Chen L.X."/>
            <person name="Brandon R.C."/>
            <person name="Rogers Y.-H.C."/>
            <person name="Blazej R.G."/>
            <person name="Champe M."/>
            <person name="Pfeiffer B.D."/>
            <person name="Wan K.H."/>
            <person name="Doyle C."/>
            <person name="Baxter E.G."/>
            <person name="Helt G."/>
            <person name="Nelson C.R."/>
            <person name="Miklos G.L.G."/>
            <person name="Abril J.F."/>
            <person name="Agbayani A."/>
            <person name="An H.-J."/>
            <person name="Andrews-Pfannkoch C."/>
            <person name="Baldwin D."/>
            <person name="Ballew R.M."/>
            <person name="Basu A."/>
            <person name="Baxendale J."/>
            <person name="Bayraktaroglu L."/>
            <person name="Beasley E.M."/>
            <person name="Beeson K.Y."/>
            <person name="Benos P.V."/>
            <person name="Berman B.P."/>
            <person name="Bhandari D."/>
            <person name="Bolshakov S."/>
            <person name="Borkova D."/>
            <person name="Botchan M.R."/>
            <person name="Bouck J."/>
            <person name="Brokstein P."/>
            <person name="Brottier P."/>
            <person name="Burtis K.C."/>
            <person name="Busam D.A."/>
            <person name="Butler H."/>
            <person name="Cadieu E."/>
            <person name="Center A."/>
            <person name="Chandra I."/>
            <person name="Cherry J.M."/>
            <person name="Cawley S."/>
            <person name="Dahlke C."/>
            <person name="Davenport L.B."/>
            <person name="Davies P."/>
            <person name="de Pablos B."/>
            <person name="Delcher A."/>
            <person name="Deng Z."/>
            <person name="Mays A.D."/>
            <person name="Dew I."/>
            <person name="Dietz S.M."/>
            <person name="Dodson K."/>
            <person name="Doup L.E."/>
            <person name="Downes M."/>
            <person name="Dugan-Rocha S."/>
            <person name="Dunkov B.C."/>
            <person name="Dunn P."/>
            <person name="Durbin K.J."/>
            <person name="Evangelista C.C."/>
            <person name="Ferraz C."/>
            <person name="Ferriera S."/>
            <person name="Fleischmann W."/>
            <person name="Fosler C."/>
            <person name="Gabrielian A.E."/>
            <person name="Garg N.S."/>
            <person name="Gelbart W.M."/>
            <person name="Glasser K."/>
            <person name="Glodek A."/>
            <person name="Gong F."/>
            <person name="Gorrell J.H."/>
            <person name="Gu Z."/>
            <person name="Guan P."/>
            <person name="Harris M."/>
            <person name="Harris N.L."/>
            <person name="Harvey D.A."/>
            <person name="Heiman T.J."/>
            <person name="Hernandez J.R."/>
            <person name="Houck J."/>
            <person name="Hostin D."/>
            <person name="Houston K.A."/>
            <person name="Howland T.J."/>
            <person name="Wei M.-H."/>
            <person name="Ibegwam C."/>
            <person name="Jalali M."/>
            <person name="Kalush F."/>
            <person name="Karpen G.H."/>
            <person name="Ke Z."/>
            <person name="Kennison J.A."/>
            <person name="Ketchum K.A."/>
            <person name="Kimmel B.E."/>
            <person name="Kodira C.D."/>
            <person name="Kraft C.L."/>
            <person name="Kravitz S."/>
            <person name="Kulp D."/>
            <person name="Lai Z."/>
            <person name="Lasko P."/>
            <person name="Lei Y."/>
            <person name="Levitsky A.A."/>
            <person name="Li J.H."/>
            <person name="Li Z."/>
            <person name="Liang Y."/>
            <person name="Lin X."/>
            <person name="Liu X."/>
            <person name="Mattei B."/>
            <person name="McIntosh T.C."/>
            <person name="McLeod M.P."/>
            <person name="McPherson D."/>
            <person name="Merkulov G."/>
            <person name="Milshina N.V."/>
            <person name="Mobarry C."/>
            <person name="Morris J."/>
            <person name="Moshrefi A."/>
            <person name="Mount S.M."/>
            <person name="Moy M."/>
            <person name="Murphy B."/>
            <person name="Murphy L."/>
            <person name="Muzny D.M."/>
            <person name="Nelson D.L."/>
            <person name="Nelson D.R."/>
            <person name="Nelson K.A."/>
            <person name="Nixon K."/>
            <person name="Nusskern D.R."/>
            <person name="Pacleb J.M."/>
            <person name="Palazzolo M."/>
            <person name="Pittman G.S."/>
            <person name="Pan S."/>
            <person name="Pollard J."/>
            <person name="Puri V."/>
            <person name="Reese M.G."/>
            <person name="Reinert K."/>
            <person name="Remington K."/>
            <person name="Saunders R.D.C."/>
            <person name="Scheeler F."/>
            <person name="Shen H."/>
            <person name="Shue B.C."/>
            <person name="Siden-Kiamos I."/>
            <person name="Simpson M."/>
            <person name="Skupski M.P."/>
            <person name="Smith T.J."/>
            <person name="Spier E."/>
            <person name="Spradling A.C."/>
            <person name="Stapleton M."/>
            <person name="Strong R."/>
            <person name="Sun E."/>
            <person name="Svirskas R."/>
            <person name="Tector C."/>
            <person name="Turner R."/>
            <person name="Venter E."/>
            <person name="Wang A.H."/>
            <person name="Wang X."/>
            <person name="Wang Z.-Y."/>
            <person name="Wassarman D.A."/>
            <person name="Weinstock G.M."/>
            <person name="Weissenbach J."/>
            <person name="Williams S.M."/>
            <person name="Woodage T."/>
            <person name="Worley K.C."/>
            <person name="Wu D."/>
            <person name="Yang S."/>
            <person name="Yao Q.A."/>
            <person name="Ye J."/>
            <person name="Yeh R.-F."/>
            <person name="Zaveri J.S."/>
            <person name="Zhan M."/>
            <person name="Zhang G."/>
            <person name="Zhao Q."/>
            <person name="Zheng L."/>
            <person name="Zheng X.H."/>
            <person name="Zhong F.N."/>
            <person name="Zhong W."/>
            <person name="Zhou X."/>
            <person name="Zhu S.C."/>
            <person name="Zhu X."/>
            <person name="Smith H.O."/>
            <person name="Gibbs R.A."/>
            <person name="Myers E.W."/>
            <person name="Rubin G.M."/>
            <person name="Venter J.C."/>
        </authorList>
    </citation>
    <scope>NUCLEOTIDE SEQUENCE [LARGE SCALE GENOMIC DNA]</scope>
    <source>
        <strain>Berkeley</strain>
    </source>
</reference>
<reference evidence="4 5" key="3">
    <citation type="journal article" date="2002" name="Genome Biol.">
        <title>Annotation of the Drosophila melanogaster euchromatic genome: a systematic review.</title>
        <authorList>
            <person name="Misra S."/>
            <person name="Crosby M.A."/>
            <person name="Mungall C.J."/>
            <person name="Matthews B.B."/>
            <person name="Campbell K.S."/>
            <person name="Hradecky P."/>
            <person name="Huang Y."/>
            <person name="Kaminker J.S."/>
            <person name="Millburn G.H."/>
            <person name="Prochnik S.E."/>
            <person name="Smith C.D."/>
            <person name="Tupy J.L."/>
            <person name="Whitfield E.J."/>
            <person name="Bayraktaroglu L."/>
            <person name="Berman B.P."/>
            <person name="Bettencourt B.R."/>
            <person name="Celniker S.E."/>
            <person name="de Grey A.D.N.J."/>
            <person name="Drysdale R.A."/>
            <person name="Harris N.L."/>
            <person name="Richter J."/>
            <person name="Russo S."/>
            <person name="Schroeder A.J."/>
            <person name="Shu S.Q."/>
            <person name="Stapleton M."/>
            <person name="Yamada C."/>
            <person name="Ashburner M."/>
            <person name="Gelbart W.M."/>
            <person name="Rubin G.M."/>
            <person name="Lewis S.E."/>
        </authorList>
    </citation>
    <scope>GENOME REANNOTATION</scope>
    <source>
        <strain>Berkeley</strain>
    </source>
</reference>
<reference evidence="7" key="4">
    <citation type="journal article" date="2002" name="Genome Biol.">
        <title>A Drosophila full-length cDNA resource.</title>
        <authorList>
            <person name="Stapleton M."/>
            <person name="Carlson J.W."/>
            <person name="Brokstein P."/>
            <person name="Yu C."/>
            <person name="Champe M."/>
            <person name="George R.A."/>
            <person name="Guarin H."/>
            <person name="Kronmiller B."/>
            <person name="Pacleb J.M."/>
            <person name="Park S."/>
            <person name="Wan K.H."/>
            <person name="Rubin G.M."/>
            <person name="Celniker S.E."/>
        </authorList>
    </citation>
    <scope>NUCLEOTIDE SEQUENCE [LARGE SCALE MRNA]</scope>
    <source>
        <strain evidence="7">Berkeley</strain>
        <tissue evidence="3">Larva</tissue>
        <tissue evidence="3">Pupae</tissue>
    </source>
</reference>
<name>TOTB_DROME</name>
<protein>
    <recommendedName>
        <fullName>Protein Turandot B</fullName>
    </recommendedName>
</protein>
<feature type="signal peptide" evidence="1">
    <location>
        <begin position="1"/>
        <end position="21"/>
    </location>
</feature>
<feature type="chain" id="PRO_0000354980" description="Protein Turandot B">
    <location>
        <begin position="22"/>
        <end position="138"/>
    </location>
</feature>
<proteinExistence type="evidence at transcript level"/>